<comment type="function">
    <text evidence="4">Role in the specific control of proper proliferation of optic lobe neuronal progeny.</text>
</comment>
<comment type="catalytic activity">
    <reaction>
        <text>L-seryl-[protein] + ATP = O-phospho-L-seryl-[protein] + ADP + H(+)</text>
        <dbReference type="Rhea" id="RHEA:17989"/>
        <dbReference type="Rhea" id="RHEA-COMP:9863"/>
        <dbReference type="Rhea" id="RHEA-COMP:11604"/>
        <dbReference type="ChEBI" id="CHEBI:15378"/>
        <dbReference type="ChEBI" id="CHEBI:29999"/>
        <dbReference type="ChEBI" id="CHEBI:30616"/>
        <dbReference type="ChEBI" id="CHEBI:83421"/>
        <dbReference type="ChEBI" id="CHEBI:456216"/>
        <dbReference type="EC" id="2.7.12.1"/>
    </reaction>
</comment>
<comment type="catalytic activity">
    <reaction>
        <text>L-threonyl-[protein] + ATP = O-phospho-L-threonyl-[protein] + ADP + H(+)</text>
        <dbReference type="Rhea" id="RHEA:46608"/>
        <dbReference type="Rhea" id="RHEA-COMP:11060"/>
        <dbReference type="Rhea" id="RHEA-COMP:11605"/>
        <dbReference type="ChEBI" id="CHEBI:15378"/>
        <dbReference type="ChEBI" id="CHEBI:30013"/>
        <dbReference type="ChEBI" id="CHEBI:30616"/>
        <dbReference type="ChEBI" id="CHEBI:61977"/>
        <dbReference type="ChEBI" id="CHEBI:456216"/>
        <dbReference type="EC" id="2.7.12.1"/>
    </reaction>
</comment>
<comment type="catalytic activity">
    <reaction>
        <text>L-tyrosyl-[protein] + ATP = O-phospho-L-tyrosyl-[protein] + ADP + H(+)</text>
        <dbReference type="Rhea" id="RHEA:10596"/>
        <dbReference type="Rhea" id="RHEA-COMP:10136"/>
        <dbReference type="Rhea" id="RHEA-COMP:20101"/>
        <dbReference type="ChEBI" id="CHEBI:15378"/>
        <dbReference type="ChEBI" id="CHEBI:30616"/>
        <dbReference type="ChEBI" id="CHEBI:46858"/>
        <dbReference type="ChEBI" id="CHEBI:61978"/>
        <dbReference type="ChEBI" id="CHEBI:456216"/>
        <dbReference type="EC" id="2.7.12.1"/>
    </reaction>
</comment>
<comment type="interaction">
    <interactant intactId="EBI-466373">
        <id>P49657</id>
    </interactant>
    <interactant intactId="EBI-92828">
        <id>Q9VR53</id>
        <label>wap</label>
    </interactant>
    <organismsDiffer>false</organismsDiffer>
    <experiments>3</experiments>
</comment>
<comment type="interaction">
    <interactant intactId="EBI-466373">
        <id>P49657</id>
    </interactant>
    <interactant intactId="EBI-82717">
        <id>Q9VA38</id>
        <label>wts</label>
    </interactant>
    <organismsDiffer>false</organismsDiffer>
    <experiments>3</experiments>
</comment>
<comment type="subcellular location">
    <subcellularLocation>
        <location evidence="6">Nucleus</location>
    </subcellularLocation>
</comment>
<comment type="alternative products">
    <event type="alternative splicing"/>
    <isoform>
        <id>P49657-1</id>
        <name>A</name>
        <sequence type="displayed"/>
    </isoform>
    <isoform>
        <id>P49657-3</id>
        <name>C</name>
        <sequence type="described" ref="VSP_004915 VSP_004916"/>
    </isoform>
    <isoform>
        <id>P49657-2</id>
        <name>D</name>
        <sequence type="described" ref="VSP_004913 VSP_004914"/>
    </isoform>
</comment>
<comment type="tissue specificity">
    <text evidence="4">In ventral nerve cord and supraesophageal ganglion of embryos. Is most prominent in the mushroom body neuropil and the outer proliferation center of the optic lobes in third instar larvae.</text>
</comment>
<comment type="developmental stage">
    <text evidence="4">Isoform A and isoform C are present mainly in embryos and pupae. By contrast, isoform D appears to be expressed most markedly in third instar larvae and pupae.</text>
</comment>
<comment type="disruption phenotype">
    <text evidence="4">Flies exhibit a specific and marked size reduction of the optic lobes and central brain hemispheres but no major alteration in neuronal architecture can be found.</text>
</comment>
<comment type="similarity">
    <text evidence="6">Belongs to the protein kinase superfamily. CMGC Ser/Thr protein kinase family. MNB/DYRK subfamily.</text>
</comment>
<comment type="sequence caution" evidence="6">
    <conflict type="frameshift">
        <sequence resource="EMBL-CDS" id="CAA50065"/>
    </conflict>
</comment>
<comment type="sequence caution" evidence="6">
    <conflict type="frameshift">
        <sequence resource="EMBL-CDS" id="CAA50068"/>
    </conflict>
</comment>
<comment type="sequence caution" evidence="6">
    <conflict type="frameshift">
        <sequence resource="EMBL-CDS" id="CAA50069"/>
    </conflict>
</comment>
<protein>
    <recommendedName>
        <fullName>Serine/threonine-protein kinase minibrain</fullName>
        <ecNumber>2.7.12.1</ecNumber>
    </recommendedName>
</protein>
<keyword id="KW-0025">Alternative splicing</keyword>
<keyword id="KW-0067">ATP-binding</keyword>
<keyword id="KW-0217">Developmental protein</keyword>
<keyword id="KW-0221">Differentiation</keyword>
<keyword id="KW-0418">Kinase</keyword>
<keyword id="KW-0524">Neurogenesis</keyword>
<keyword id="KW-0547">Nucleotide-binding</keyword>
<keyword id="KW-0539">Nucleus</keyword>
<keyword id="KW-1185">Reference proteome</keyword>
<keyword id="KW-0723">Serine/threonine-protein kinase</keyword>
<keyword id="KW-0808">Transferase</keyword>
<feature type="chain" id="PRO_0000086340" description="Serine/threonine-protein kinase minibrain">
    <location>
        <begin position="1"/>
        <end position="908"/>
    </location>
</feature>
<feature type="domain" description="Protein kinase" evidence="1">
    <location>
        <begin position="164"/>
        <end position="484"/>
    </location>
</feature>
<feature type="region of interest" description="Disordered" evidence="3">
    <location>
        <begin position="1"/>
        <end position="46"/>
    </location>
</feature>
<feature type="region of interest" description="Disordered" evidence="3">
    <location>
        <begin position="119"/>
        <end position="143"/>
    </location>
</feature>
<feature type="region of interest" description="Disordered" evidence="3">
    <location>
        <begin position="552"/>
        <end position="592"/>
    </location>
</feature>
<feature type="region of interest" description="Disordered" evidence="3">
    <location>
        <begin position="623"/>
        <end position="669"/>
    </location>
</feature>
<feature type="region of interest" description="Disordered" evidence="3">
    <location>
        <begin position="863"/>
        <end position="895"/>
    </location>
</feature>
<feature type="short sequence motif" description="Bipartite nuclear localization signal">
    <location>
        <begin position="121"/>
        <end position="139"/>
    </location>
</feature>
<feature type="compositionally biased region" description="Basic and acidic residues" evidence="3">
    <location>
        <begin position="132"/>
        <end position="141"/>
    </location>
</feature>
<feature type="compositionally biased region" description="Gly residues" evidence="3">
    <location>
        <begin position="556"/>
        <end position="566"/>
    </location>
</feature>
<feature type="compositionally biased region" description="Low complexity" evidence="3">
    <location>
        <begin position="567"/>
        <end position="576"/>
    </location>
</feature>
<feature type="compositionally biased region" description="Pro residues" evidence="3">
    <location>
        <begin position="577"/>
        <end position="589"/>
    </location>
</feature>
<feature type="compositionally biased region" description="Polar residues" evidence="3">
    <location>
        <begin position="623"/>
        <end position="654"/>
    </location>
</feature>
<feature type="compositionally biased region" description="Low complexity" evidence="3">
    <location>
        <begin position="655"/>
        <end position="664"/>
    </location>
</feature>
<feature type="compositionally biased region" description="Low complexity" evidence="3">
    <location>
        <begin position="868"/>
        <end position="893"/>
    </location>
</feature>
<feature type="active site" description="Proton acceptor" evidence="1 2">
    <location>
        <position position="292"/>
    </location>
</feature>
<feature type="binding site" evidence="1">
    <location>
        <begin position="170"/>
        <end position="178"/>
    </location>
    <ligand>
        <name>ATP</name>
        <dbReference type="ChEBI" id="CHEBI:30616"/>
    </ligand>
</feature>
<feature type="binding site" evidence="1">
    <location>
        <position position="193"/>
    </location>
    <ligand>
        <name>ATP</name>
        <dbReference type="ChEBI" id="CHEBI:30616"/>
    </ligand>
</feature>
<feature type="binding site" evidence="1">
    <location>
        <begin position="243"/>
        <end position="246"/>
    </location>
    <ligand>
        <name>ATP</name>
        <dbReference type="ChEBI" id="CHEBI:30616"/>
    </ligand>
</feature>
<feature type="splice variant" id="VSP_004915" description="In isoform C." evidence="5">
    <original>GLLMHSV</original>
    <variation>VRRIVRI</variation>
    <location>
        <begin position="601"/>
        <end position="607"/>
    </location>
</feature>
<feature type="splice variant" id="VSP_004913" description="In isoform D." evidence="5">
    <original>GLLM</original>
    <variation>DDRR</variation>
    <location>
        <begin position="601"/>
        <end position="604"/>
    </location>
</feature>
<feature type="splice variant" id="VSP_004914" description="In isoform D." evidence="5">
    <location>
        <begin position="605"/>
        <end position="908"/>
    </location>
</feature>
<feature type="splice variant" id="VSP_004916" description="In isoform C." evidence="5">
    <location>
        <begin position="608"/>
        <end position="908"/>
    </location>
</feature>
<feature type="sequence variant" description="In mnb1; reduced brain volume.">
    <original>A</original>
    <variation>T</variation>
    <location>
        <position position="191"/>
    </location>
</feature>
<feature type="sequence conflict" description="In Ref. 1; CAA50065/CAA50068/CAA50069." evidence="6" ref="1">
    <original>HA</original>
    <variation>S</variation>
    <location>
        <begin position="45"/>
        <end position="46"/>
    </location>
</feature>
<proteinExistence type="evidence at protein level"/>
<reference key="1">
    <citation type="journal article" date="1995" name="Neuron">
        <title>Minibrain: a new protein kinase family involved in postembryonic neurogenesis in Drosophila.</title>
        <authorList>
            <person name="Tejedor F."/>
            <person name="Zhu X.R."/>
            <person name="Kaltenbach E."/>
            <person name="Ackermann A."/>
            <person name="Baumann A."/>
            <person name="Canal I."/>
            <person name="Heisenberg M."/>
            <person name="Fischbach K.F."/>
            <person name="Pongs O."/>
        </authorList>
    </citation>
    <scope>NUCLEOTIDE SEQUENCE [MRNA] (ISOFORMS A; C AND D)</scope>
    <scope>FUNCTION</scope>
    <scope>TISSUE SPECIFICITY</scope>
    <scope>DEVELOPMENTAL STAGE</scope>
    <scope>DISRUPTION PHENOTYPE</scope>
    <source>
        <strain>Berlin</strain>
    </source>
</reference>
<reference key="2">
    <citation type="journal article" date="2000" name="Science">
        <title>The genome sequence of Drosophila melanogaster.</title>
        <authorList>
            <person name="Adams M.D."/>
            <person name="Celniker S.E."/>
            <person name="Holt R.A."/>
            <person name="Evans C.A."/>
            <person name="Gocayne J.D."/>
            <person name="Amanatides P.G."/>
            <person name="Scherer S.E."/>
            <person name="Li P.W."/>
            <person name="Hoskins R.A."/>
            <person name="Galle R.F."/>
            <person name="George R.A."/>
            <person name="Lewis S.E."/>
            <person name="Richards S."/>
            <person name="Ashburner M."/>
            <person name="Henderson S.N."/>
            <person name="Sutton G.G."/>
            <person name="Wortman J.R."/>
            <person name="Yandell M.D."/>
            <person name="Zhang Q."/>
            <person name="Chen L.X."/>
            <person name="Brandon R.C."/>
            <person name="Rogers Y.-H.C."/>
            <person name="Blazej R.G."/>
            <person name="Champe M."/>
            <person name="Pfeiffer B.D."/>
            <person name="Wan K.H."/>
            <person name="Doyle C."/>
            <person name="Baxter E.G."/>
            <person name="Helt G."/>
            <person name="Nelson C.R."/>
            <person name="Miklos G.L.G."/>
            <person name="Abril J.F."/>
            <person name="Agbayani A."/>
            <person name="An H.-J."/>
            <person name="Andrews-Pfannkoch C."/>
            <person name="Baldwin D."/>
            <person name="Ballew R.M."/>
            <person name="Basu A."/>
            <person name="Baxendale J."/>
            <person name="Bayraktaroglu L."/>
            <person name="Beasley E.M."/>
            <person name="Beeson K.Y."/>
            <person name="Benos P.V."/>
            <person name="Berman B.P."/>
            <person name="Bhandari D."/>
            <person name="Bolshakov S."/>
            <person name="Borkova D."/>
            <person name="Botchan M.R."/>
            <person name="Bouck J."/>
            <person name="Brokstein P."/>
            <person name="Brottier P."/>
            <person name="Burtis K.C."/>
            <person name="Busam D.A."/>
            <person name="Butler H."/>
            <person name="Cadieu E."/>
            <person name="Center A."/>
            <person name="Chandra I."/>
            <person name="Cherry J.M."/>
            <person name="Cawley S."/>
            <person name="Dahlke C."/>
            <person name="Davenport L.B."/>
            <person name="Davies P."/>
            <person name="de Pablos B."/>
            <person name="Delcher A."/>
            <person name="Deng Z."/>
            <person name="Mays A.D."/>
            <person name="Dew I."/>
            <person name="Dietz S.M."/>
            <person name="Dodson K."/>
            <person name="Doup L.E."/>
            <person name="Downes M."/>
            <person name="Dugan-Rocha S."/>
            <person name="Dunkov B.C."/>
            <person name="Dunn P."/>
            <person name="Durbin K.J."/>
            <person name="Evangelista C.C."/>
            <person name="Ferraz C."/>
            <person name="Ferriera S."/>
            <person name="Fleischmann W."/>
            <person name="Fosler C."/>
            <person name="Gabrielian A.E."/>
            <person name="Garg N.S."/>
            <person name="Gelbart W.M."/>
            <person name="Glasser K."/>
            <person name="Glodek A."/>
            <person name="Gong F."/>
            <person name="Gorrell J.H."/>
            <person name="Gu Z."/>
            <person name="Guan P."/>
            <person name="Harris M."/>
            <person name="Harris N.L."/>
            <person name="Harvey D.A."/>
            <person name="Heiman T.J."/>
            <person name="Hernandez J.R."/>
            <person name="Houck J."/>
            <person name="Hostin D."/>
            <person name="Houston K.A."/>
            <person name="Howland T.J."/>
            <person name="Wei M.-H."/>
            <person name="Ibegwam C."/>
            <person name="Jalali M."/>
            <person name="Kalush F."/>
            <person name="Karpen G.H."/>
            <person name="Ke Z."/>
            <person name="Kennison J.A."/>
            <person name="Ketchum K.A."/>
            <person name="Kimmel B.E."/>
            <person name="Kodira C.D."/>
            <person name="Kraft C.L."/>
            <person name="Kravitz S."/>
            <person name="Kulp D."/>
            <person name="Lai Z."/>
            <person name="Lasko P."/>
            <person name="Lei Y."/>
            <person name="Levitsky A.A."/>
            <person name="Li J.H."/>
            <person name="Li Z."/>
            <person name="Liang Y."/>
            <person name="Lin X."/>
            <person name="Liu X."/>
            <person name="Mattei B."/>
            <person name="McIntosh T.C."/>
            <person name="McLeod M.P."/>
            <person name="McPherson D."/>
            <person name="Merkulov G."/>
            <person name="Milshina N.V."/>
            <person name="Mobarry C."/>
            <person name="Morris J."/>
            <person name="Moshrefi A."/>
            <person name="Mount S.M."/>
            <person name="Moy M."/>
            <person name="Murphy B."/>
            <person name="Murphy L."/>
            <person name="Muzny D.M."/>
            <person name="Nelson D.L."/>
            <person name="Nelson D.R."/>
            <person name="Nelson K.A."/>
            <person name="Nixon K."/>
            <person name="Nusskern D.R."/>
            <person name="Pacleb J.M."/>
            <person name="Palazzolo M."/>
            <person name="Pittman G.S."/>
            <person name="Pan S."/>
            <person name="Pollard J."/>
            <person name="Puri V."/>
            <person name="Reese M.G."/>
            <person name="Reinert K."/>
            <person name="Remington K."/>
            <person name="Saunders R.D.C."/>
            <person name="Scheeler F."/>
            <person name="Shen H."/>
            <person name="Shue B.C."/>
            <person name="Siden-Kiamos I."/>
            <person name="Simpson M."/>
            <person name="Skupski M.P."/>
            <person name="Smith T.J."/>
            <person name="Spier E."/>
            <person name="Spradling A.C."/>
            <person name="Stapleton M."/>
            <person name="Strong R."/>
            <person name="Sun E."/>
            <person name="Svirskas R."/>
            <person name="Tector C."/>
            <person name="Turner R."/>
            <person name="Venter E."/>
            <person name="Wang A.H."/>
            <person name="Wang X."/>
            <person name="Wang Z.-Y."/>
            <person name="Wassarman D.A."/>
            <person name="Weinstock G.M."/>
            <person name="Weissenbach J."/>
            <person name="Williams S.M."/>
            <person name="Woodage T."/>
            <person name="Worley K.C."/>
            <person name="Wu D."/>
            <person name="Yang S."/>
            <person name="Yao Q.A."/>
            <person name="Ye J."/>
            <person name="Yeh R.-F."/>
            <person name="Zaveri J.S."/>
            <person name="Zhan M."/>
            <person name="Zhang G."/>
            <person name="Zhao Q."/>
            <person name="Zheng L."/>
            <person name="Zheng X.H."/>
            <person name="Zhong F.N."/>
            <person name="Zhong W."/>
            <person name="Zhou X."/>
            <person name="Zhu S.C."/>
            <person name="Zhu X."/>
            <person name="Smith H.O."/>
            <person name="Gibbs R.A."/>
            <person name="Myers E.W."/>
            <person name="Rubin G.M."/>
            <person name="Venter J.C."/>
        </authorList>
    </citation>
    <scope>NUCLEOTIDE SEQUENCE [LARGE SCALE GENOMIC DNA]</scope>
    <source>
        <strain>Berkeley</strain>
    </source>
</reference>
<reference key="3">
    <citation type="journal article" date="2002" name="Genome Biol.">
        <title>Annotation of the Drosophila melanogaster euchromatic genome: a systematic review.</title>
        <authorList>
            <person name="Misra S."/>
            <person name="Crosby M.A."/>
            <person name="Mungall C.J."/>
            <person name="Matthews B.B."/>
            <person name="Campbell K.S."/>
            <person name="Hradecky P."/>
            <person name="Huang Y."/>
            <person name="Kaminker J.S."/>
            <person name="Millburn G.H."/>
            <person name="Prochnik S.E."/>
            <person name="Smith C.D."/>
            <person name="Tupy J.L."/>
            <person name="Whitfield E.J."/>
            <person name="Bayraktaroglu L."/>
            <person name="Berman B.P."/>
            <person name="Bettencourt B.R."/>
            <person name="Celniker S.E."/>
            <person name="de Grey A.D.N.J."/>
            <person name="Drysdale R.A."/>
            <person name="Harris N.L."/>
            <person name="Richter J."/>
            <person name="Russo S."/>
            <person name="Schroeder A.J."/>
            <person name="Shu S.Q."/>
            <person name="Stapleton M."/>
            <person name="Yamada C."/>
            <person name="Ashburner M."/>
            <person name="Gelbart W.M."/>
            <person name="Rubin G.M."/>
            <person name="Lewis S.E."/>
        </authorList>
    </citation>
    <scope>GENOME REANNOTATION</scope>
    <scope>ALTERNATIVE SPLICING</scope>
    <source>
        <strain>Berkeley</strain>
    </source>
</reference>
<reference key="4">
    <citation type="submission" date="2004-08" db="EMBL/GenBank/DDBJ databases">
        <authorList>
            <person name="Stapleton M."/>
            <person name="Carlson J.W."/>
            <person name="Chavez C."/>
            <person name="Frise E."/>
            <person name="George R.A."/>
            <person name="Pacleb J.M."/>
            <person name="Park S."/>
            <person name="Wan K.H."/>
            <person name="Yu C."/>
            <person name="Rubin G.M."/>
            <person name="Celniker S.E."/>
        </authorList>
    </citation>
    <scope>NUCLEOTIDE SEQUENCE [LARGE SCALE MRNA] OF 21-908 (ISOFORM A)</scope>
    <source>
        <strain>Berkeley</strain>
        <tissue>Larva</tissue>
        <tissue>Pupae</tissue>
    </source>
</reference>
<name>MNB_DROME</name>
<gene>
    <name type="primary">mnb</name>
    <name type="ORF">CG7826</name>
</gene>
<sequence length="908" mass="95903">MYRLEDTNSGGVMDKNKQKLSAYGSSGGSVDAAQGSGSGGGRQRHAPLYGRFVDAEDLPATHRDVMHHHSSPSSSSEVRAMQARIPNHFREPASGPLRKLSVDLIKTYKHINEVYYAKKKRRAQQTQGDDDSSNKKERKLYNDGYDDDNHDYIIKNGEKFLDRYEIDSLIGKGSFGQVVKAYDHEEQCHVAIKIIKNKKPFLNQAQIEVKLLEMMNRADAENKYYIVKLKRHFMWRNHLCLVFELLSYNLYDLLRNTNFRGVSLNLTRKFAQQLCTALLFLSTPELNIIHCDLKPENILLCNPKRSAIKIVDFGSSCQLGQRIYHYIQSRFYRSPEVLLGIQYDLAIDMWSLGCILVEMHTGEPLFSGCNEVDQMNKIVEVLGMPPKYLLDQAHKTRKFFDKIVADGSYVLKKNQNGRKYKPPGSRKLHDILGVETGGPGGRRLDEPGHSVSDYLKFKDLILRMLDFDPKTRVTPYYALQHNFFKRTADEATNTSGAGATANAGAGGSGSSGAGGSSGGGVGGGLGASNSSSGAVSSSSAAAPTAATAAATAAGSSGSGSSVGGGSSAAQQQQAMPLPLPLPLPLPPLAGPGGASDGQCHGLLMHSVAANAMNNFSALSLQSNAHPPPSLANSHHSTNSLGSLNHISPGSTGCHNNNSNSSNNNTRHSRLYGSNMVNMVGHHNSGSSNNHNSISYPHAMECDPPQMPPPPPNGHGRMRVPAIMQLQPNSYAPNSVPYYGNMSSSSVAAAAAAAAAAASHLMMTDSSVISASAAGGGQGGGNPGQNPVTPSAAAFLFPSQPAGTLYGTALGSLSDLPLPMPLPMSVPLQLPPSSSSSVSSGSASVGSGGVGVGVVGQRRHITGPAAQVGISQSVGSGSSGSATGASSSDASSSSPMVGVCVQQNPVVIH</sequence>
<organism>
    <name type="scientific">Drosophila melanogaster</name>
    <name type="common">Fruit fly</name>
    <dbReference type="NCBI Taxonomy" id="7227"/>
    <lineage>
        <taxon>Eukaryota</taxon>
        <taxon>Metazoa</taxon>
        <taxon>Ecdysozoa</taxon>
        <taxon>Arthropoda</taxon>
        <taxon>Hexapoda</taxon>
        <taxon>Insecta</taxon>
        <taxon>Pterygota</taxon>
        <taxon>Neoptera</taxon>
        <taxon>Endopterygota</taxon>
        <taxon>Diptera</taxon>
        <taxon>Brachycera</taxon>
        <taxon>Muscomorpha</taxon>
        <taxon>Ephydroidea</taxon>
        <taxon>Drosophilidae</taxon>
        <taxon>Drosophila</taxon>
        <taxon>Sophophora</taxon>
    </lineage>
</organism>
<accession>P49657</accession>
<accession>Q59E39</accession>
<accession>Q6AWJ3</accession>
<accession>Q9I7R8</accession>
<accession>Q9VX07</accession>
<evidence type="ECO:0000255" key="1">
    <source>
        <dbReference type="PROSITE-ProRule" id="PRU00159"/>
    </source>
</evidence>
<evidence type="ECO:0000255" key="2">
    <source>
        <dbReference type="PROSITE-ProRule" id="PRU10027"/>
    </source>
</evidence>
<evidence type="ECO:0000256" key="3">
    <source>
        <dbReference type="SAM" id="MobiDB-lite"/>
    </source>
</evidence>
<evidence type="ECO:0000269" key="4">
    <source>
    </source>
</evidence>
<evidence type="ECO:0000303" key="5">
    <source>
    </source>
</evidence>
<evidence type="ECO:0000305" key="6"/>
<dbReference type="EC" id="2.7.12.1"/>
<dbReference type="EMBL" id="X70794">
    <property type="protein sequence ID" value="CAA50065.1"/>
    <property type="status" value="ALT_FRAME"/>
    <property type="molecule type" value="mRNA"/>
</dbReference>
<dbReference type="EMBL" id="X70798">
    <property type="protein sequence ID" value="CAA50068.1"/>
    <property type="status" value="ALT_FRAME"/>
    <property type="molecule type" value="mRNA"/>
</dbReference>
<dbReference type="EMBL" id="X70799">
    <property type="protein sequence ID" value="CAA50069.1"/>
    <property type="status" value="ALT_FRAME"/>
    <property type="molecule type" value="mRNA"/>
</dbReference>
<dbReference type="EMBL" id="AE014298">
    <property type="protein sequence ID" value="AAF48777.3"/>
    <property type="molecule type" value="Genomic_DNA"/>
</dbReference>
<dbReference type="EMBL" id="AE014298">
    <property type="protein sequence ID" value="AAN09442.1"/>
    <property type="molecule type" value="Genomic_DNA"/>
</dbReference>
<dbReference type="EMBL" id="AE014298">
    <property type="protein sequence ID" value="AAX52504.1"/>
    <property type="molecule type" value="Genomic_DNA"/>
</dbReference>
<dbReference type="EMBL" id="BT015255">
    <property type="protein sequence ID" value="AAT94484.1"/>
    <property type="status" value="ALT_SEQ"/>
    <property type="molecule type" value="mRNA"/>
</dbReference>
<dbReference type="RefSeq" id="NP_001014750.1">
    <molecule id="P49657-2"/>
    <property type="nucleotide sequence ID" value="NM_001014750.2"/>
</dbReference>
<dbReference type="RefSeq" id="NP_728104.1">
    <molecule id="P49657-1"/>
    <property type="nucleotide sequence ID" value="NM_167581.3"/>
</dbReference>
<dbReference type="RefSeq" id="NP_728106.1">
    <molecule id="P49657-3"/>
    <property type="nucleotide sequence ID" value="NM_170658.3"/>
</dbReference>
<dbReference type="SMR" id="P49657"/>
<dbReference type="BioGRID" id="59093">
    <property type="interactions" value="21"/>
</dbReference>
<dbReference type="DIP" id="DIP-49177N"/>
<dbReference type="FunCoup" id="P49657">
    <property type="interactions" value="157"/>
</dbReference>
<dbReference type="IntAct" id="P49657">
    <property type="interactions" value="52"/>
</dbReference>
<dbReference type="STRING" id="7227.FBpp0289737"/>
<dbReference type="GlyGen" id="P49657">
    <property type="glycosylation" value="3 sites, 1 O-linked glycan (1 site)"/>
</dbReference>
<dbReference type="PaxDb" id="7227-FBpp0289737"/>
<dbReference type="DNASU" id="32771"/>
<dbReference type="EnsemblMetazoa" id="FBtr0299619">
    <molecule id="P49657-3"/>
    <property type="protein sequence ID" value="FBpp0288894"/>
    <property type="gene ID" value="FBgn0259168"/>
</dbReference>
<dbReference type="EnsemblMetazoa" id="FBtr0300508">
    <molecule id="P49657-1"/>
    <property type="protein sequence ID" value="FBpp0289735"/>
    <property type="gene ID" value="FBgn0259168"/>
</dbReference>
<dbReference type="EnsemblMetazoa" id="FBtr0300509">
    <molecule id="P49657-2"/>
    <property type="protein sequence ID" value="FBpp0289736"/>
    <property type="gene ID" value="FBgn0259168"/>
</dbReference>
<dbReference type="GeneID" id="32771"/>
<dbReference type="KEGG" id="dme:Dmel_CG42273"/>
<dbReference type="UCSC" id="CG42273-RB">
    <property type="organism name" value="d. melanogaster"/>
</dbReference>
<dbReference type="AGR" id="FB:FBgn0259168"/>
<dbReference type="CTD" id="32771"/>
<dbReference type="FlyBase" id="FBgn0259168">
    <property type="gene designation" value="mnb"/>
</dbReference>
<dbReference type="VEuPathDB" id="VectorBase:FBgn0259168"/>
<dbReference type="eggNOG" id="KOG0667">
    <property type="taxonomic scope" value="Eukaryota"/>
</dbReference>
<dbReference type="GeneTree" id="ENSGT00940000170191"/>
<dbReference type="InParanoid" id="P49657"/>
<dbReference type="OrthoDB" id="9332038at2759"/>
<dbReference type="PhylomeDB" id="P49657"/>
<dbReference type="BRENDA" id="2.7.12.1">
    <property type="organism ID" value="1994"/>
</dbReference>
<dbReference type="Reactome" id="R-DME-1538133">
    <property type="pathway name" value="G0 and Early G1"/>
</dbReference>
<dbReference type="BioGRID-ORCS" id="32771">
    <property type="hits" value="0 hits in 3 CRISPR screens"/>
</dbReference>
<dbReference type="ChiTaRS" id="mnb">
    <property type="organism name" value="fly"/>
</dbReference>
<dbReference type="GenomeRNAi" id="32771"/>
<dbReference type="PRO" id="PR:P49657"/>
<dbReference type="Proteomes" id="UP000000803">
    <property type="component" value="Chromosome X"/>
</dbReference>
<dbReference type="Bgee" id="FBgn0259168">
    <property type="expression patterns" value="Expressed in adult oenocyte (Drosophila) in body wall and 291 other cell types or tissues"/>
</dbReference>
<dbReference type="ExpressionAtlas" id="P49657">
    <property type="expression patterns" value="baseline and differential"/>
</dbReference>
<dbReference type="GO" id="GO:0005634">
    <property type="term" value="C:nucleus"/>
    <property type="evidence" value="ECO:0000318"/>
    <property type="project" value="GO_Central"/>
</dbReference>
<dbReference type="GO" id="GO:0043195">
    <property type="term" value="C:terminal bouton"/>
    <property type="evidence" value="ECO:0000314"/>
    <property type="project" value="FlyBase"/>
</dbReference>
<dbReference type="GO" id="GO:0005524">
    <property type="term" value="F:ATP binding"/>
    <property type="evidence" value="ECO:0007669"/>
    <property type="project" value="UniProtKB-KW"/>
</dbReference>
<dbReference type="GO" id="GO:0004860">
    <property type="term" value="F:protein kinase inhibitor activity"/>
    <property type="evidence" value="ECO:0000314"/>
    <property type="project" value="FlyBase"/>
</dbReference>
<dbReference type="GO" id="GO:0106310">
    <property type="term" value="F:protein serine kinase activity"/>
    <property type="evidence" value="ECO:0007669"/>
    <property type="project" value="RHEA"/>
</dbReference>
<dbReference type="GO" id="GO:0004674">
    <property type="term" value="F:protein serine/threonine kinase activity"/>
    <property type="evidence" value="ECO:0000314"/>
    <property type="project" value="FlyBase"/>
</dbReference>
<dbReference type="GO" id="GO:0004712">
    <property type="term" value="F:protein serine/threonine/tyrosine kinase activity"/>
    <property type="evidence" value="ECO:0007669"/>
    <property type="project" value="UniProtKB-EC"/>
</dbReference>
<dbReference type="GO" id="GO:0004713">
    <property type="term" value="F:protein tyrosine kinase activity"/>
    <property type="evidence" value="ECO:0007669"/>
    <property type="project" value="RHEA"/>
</dbReference>
<dbReference type="GO" id="GO:0003713">
    <property type="term" value="F:transcription coactivator activity"/>
    <property type="evidence" value="ECO:0000318"/>
    <property type="project" value="GO_Central"/>
</dbReference>
<dbReference type="GO" id="GO:0030154">
    <property type="term" value="P:cell differentiation"/>
    <property type="evidence" value="ECO:0007669"/>
    <property type="project" value="UniProtKB-KW"/>
</dbReference>
<dbReference type="GO" id="GO:0007623">
    <property type="term" value="P:circadian rhythm"/>
    <property type="evidence" value="ECO:0000316"/>
    <property type="project" value="FlyBase"/>
</dbReference>
<dbReference type="GO" id="GO:0045786">
    <property type="term" value="P:negative regulation of cell cycle"/>
    <property type="evidence" value="ECO:0000315"/>
    <property type="project" value="FlyBase"/>
</dbReference>
<dbReference type="GO" id="GO:0035331">
    <property type="term" value="P:negative regulation of hippo signaling"/>
    <property type="evidence" value="ECO:0000315"/>
    <property type="project" value="FlyBase"/>
</dbReference>
<dbReference type="GO" id="GO:0007399">
    <property type="term" value="P:nervous system development"/>
    <property type="evidence" value="ECO:0000315"/>
    <property type="project" value="FlyBase"/>
</dbReference>
<dbReference type="GO" id="GO:0008355">
    <property type="term" value="P:olfactory learning"/>
    <property type="evidence" value="ECO:0000315"/>
    <property type="project" value="FlyBase"/>
</dbReference>
<dbReference type="GO" id="GO:0045893">
    <property type="term" value="P:positive regulation of DNA-templated transcription"/>
    <property type="evidence" value="ECO:0000318"/>
    <property type="project" value="GO_Central"/>
</dbReference>
<dbReference type="GO" id="GO:2000253">
    <property type="term" value="P:positive regulation of feeding behavior"/>
    <property type="evidence" value="ECO:0000315"/>
    <property type="project" value="FlyBase"/>
</dbReference>
<dbReference type="GO" id="GO:0045927">
    <property type="term" value="P:positive regulation of growth"/>
    <property type="evidence" value="ECO:0000315"/>
    <property type="project" value="FlyBase"/>
</dbReference>
<dbReference type="GO" id="GO:0045666">
    <property type="term" value="P:positive regulation of neuron differentiation"/>
    <property type="evidence" value="ECO:0000270"/>
    <property type="project" value="FlyBase"/>
</dbReference>
<dbReference type="GO" id="GO:0046622">
    <property type="term" value="P:positive regulation of organ growth"/>
    <property type="evidence" value="ECO:0000315"/>
    <property type="project" value="FlyBase"/>
</dbReference>
<dbReference type="GO" id="GO:0045887">
    <property type="term" value="P:positive regulation of synaptic assembly at neuromuscular junction"/>
    <property type="evidence" value="ECO:0000315"/>
    <property type="project" value="FlyBase"/>
</dbReference>
<dbReference type="GO" id="GO:1900244">
    <property type="term" value="P:positive regulation of synaptic vesicle endocytosis"/>
    <property type="evidence" value="ECO:0000315"/>
    <property type="project" value="FlyBase"/>
</dbReference>
<dbReference type="GO" id="GO:1904263">
    <property type="term" value="P:positive regulation of TORC1 signaling"/>
    <property type="evidence" value="ECO:0000316"/>
    <property type="project" value="FlyBase"/>
</dbReference>
<dbReference type="GO" id="GO:0007632">
    <property type="term" value="P:visual behavior"/>
    <property type="evidence" value="ECO:0000315"/>
    <property type="project" value="FlyBase"/>
</dbReference>
<dbReference type="CDD" id="cd14226">
    <property type="entry name" value="PKc_DYRK1"/>
    <property type="match status" value="1"/>
</dbReference>
<dbReference type="FunFam" id="3.30.200.20:FF:000087">
    <property type="entry name" value="Dual specificity tyrosine-phosphorylation-regulated kinase 1A"/>
    <property type="match status" value="1"/>
</dbReference>
<dbReference type="FunFam" id="1.10.510.10:FF:000117">
    <property type="entry name" value="dual specificity tyrosine-phosphorylation-regulated kinase 1A isoform X1"/>
    <property type="match status" value="1"/>
</dbReference>
<dbReference type="Gene3D" id="3.30.200.20">
    <property type="entry name" value="Phosphorylase Kinase, domain 1"/>
    <property type="match status" value="1"/>
</dbReference>
<dbReference type="Gene3D" id="1.10.510.10">
    <property type="entry name" value="Transferase(Phosphotransferase) domain 1"/>
    <property type="match status" value="1"/>
</dbReference>
<dbReference type="InterPro" id="IPR011009">
    <property type="entry name" value="Kinase-like_dom_sf"/>
</dbReference>
<dbReference type="InterPro" id="IPR044131">
    <property type="entry name" value="PKc_DYR1A/1B"/>
</dbReference>
<dbReference type="InterPro" id="IPR000719">
    <property type="entry name" value="Prot_kinase_dom"/>
</dbReference>
<dbReference type="InterPro" id="IPR017441">
    <property type="entry name" value="Protein_kinase_ATP_BS"/>
</dbReference>
<dbReference type="InterPro" id="IPR008271">
    <property type="entry name" value="Ser/Thr_kinase_AS"/>
</dbReference>
<dbReference type="InterPro" id="IPR050494">
    <property type="entry name" value="Ser_Thr_dual-spec_kinase"/>
</dbReference>
<dbReference type="PANTHER" id="PTHR24058">
    <property type="entry name" value="DUAL SPECIFICITY PROTEIN KINASE"/>
    <property type="match status" value="1"/>
</dbReference>
<dbReference type="PANTHER" id="PTHR24058:SF28">
    <property type="entry name" value="SERINE_THREONINE-PROTEIN KINASE MINIBRAIN"/>
    <property type="match status" value="1"/>
</dbReference>
<dbReference type="Pfam" id="PF00069">
    <property type="entry name" value="Pkinase"/>
    <property type="match status" value="1"/>
</dbReference>
<dbReference type="SMART" id="SM00220">
    <property type="entry name" value="S_TKc"/>
    <property type="match status" value="1"/>
</dbReference>
<dbReference type="SUPFAM" id="SSF56112">
    <property type="entry name" value="Protein kinase-like (PK-like)"/>
    <property type="match status" value="1"/>
</dbReference>
<dbReference type="PROSITE" id="PS00107">
    <property type="entry name" value="PROTEIN_KINASE_ATP"/>
    <property type="match status" value="1"/>
</dbReference>
<dbReference type="PROSITE" id="PS50011">
    <property type="entry name" value="PROTEIN_KINASE_DOM"/>
    <property type="match status" value="1"/>
</dbReference>
<dbReference type="PROSITE" id="PS00108">
    <property type="entry name" value="PROTEIN_KINASE_ST"/>
    <property type="match status" value="1"/>
</dbReference>